<sequence length="733" mass="84461">MSKNQSVSASEDEKEILNNNAEGHKPQRLFDQEPDLTEEALTKFENLDDCIYANKRIGTFKNNDFMECDCYEEFSDGVNHACDEDSDCINRLTLIECVNDLCSSCGNDCQNQRFQKKQYAPIAIFKTKHKGYGVRAEQDIEANQFIYEYKGEVIEEMEFRDRLIDYDQRHFKHFYFMMLQNGEFIDATIKGSLARFCNHSCSPNAYVNKWVVKDKLRMGIFAQRKILKGEEITFDYNVDRYGAQAQKCYCEEPNCIGFLGGKTQTDAASLLPQNIADALGVTVSMEKKWLKLKKLSGEPIIKNENENINIEFLQSLEVQPIDSPVDVTKIMSVLLQQDNKIIASKLLKRLFTIDDDSLRHQAIKLHGYTCFSKMLKLFITEQPQVDGKGNETEEDDIKFIKGILDFLLELPKTTRNGIESSQIDNVVKTLPAKFPFLKPNCDELLEKWSKFETYKRITKKDINVAASKMIDLRRVRLPPGWEIIHENGRPLYYNAEQKTKLHYPPSGSSKVFSSRSNTQVNSPSSSGIPKTPGALDSKKHKLSDEEYERKKQKRLEYERIALERAKQEELESLKQKLKLENERKSVLEDIIAEANKQKELQKEEAKKLVEAKEAKRLKRKTVSQSQRLEHNWNKFFASFVPNLIKKNPQSKQFDHENIKQCAKDIVKILTTKELKKDSSRAPPDDLTKGKRHKVKEFINSYMDKIILKKKQKKALALSSASTRMSSPPPSTSS</sequence>
<gene>
    <name type="primary">SET2</name>
    <name type="synonym">EZL1</name>
    <name type="synonym">KMT3</name>
    <name type="ordered locus">YJL168C</name>
    <name type="ORF">J0520</name>
</gene>
<name>SET2_YEAST</name>
<protein>
    <recommendedName>
        <fullName>Histone-lysine N-methyltransferase, H3 lysine-36 specific</fullName>
        <ecNumber evidence="7 13 18">2.1.1.359</ecNumber>
    </recommendedName>
    <alternativeName>
        <fullName>Lysine N-methyltransferase 3</fullName>
    </alternativeName>
    <alternativeName>
        <fullName>SET domain-containing protein 2</fullName>
    </alternativeName>
</protein>
<proteinExistence type="evidence at protein level"/>
<accession>P46995</accession>
<accession>D6VW19</accession>
<feature type="chain" id="PRO_0000186087" description="Histone-lysine N-methyltransferase, H3 lysine-36 specific">
    <location>
        <begin position="1"/>
        <end position="733"/>
    </location>
</feature>
<feature type="domain" description="AWS" evidence="4">
    <location>
        <begin position="63"/>
        <end position="118"/>
    </location>
</feature>
<feature type="domain" description="SET" evidence="3">
    <location>
        <begin position="120"/>
        <end position="237"/>
    </location>
</feature>
<feature type="domain" description="Post-SET" evidence="2">
    <location>
        <begin position="244"/>
        <end position="260"/>
    </location>
</feature>
<feature type="domain" description="WW">
    <location>
        <begin position="475"/>
        <end position="507"/>
    </location>
</feature>
<feature type="region of interest" description="Disordered" evidence="6">
    <location>
        <begin position="1"/>
        <end position="32"/>
    </location>
</feature>
<feature type="region of interest" description="Disordered" evidence="6">
    <location>
        <begin position="504"/>
        <end position="548"/>
    </location>
</feature>
<feature type="region of interest" description="Binding to RNA polymerase II CTD">
    <location>
        <begin position="619"/>
        <end position="718"/>
    </location>
</feature>
<feature type="region of interest" description="Disordered" evidence="6">
    <location>
        <begin position="672"/>
        <end position="692"/>
    </location>
</feature>
<feature type="coiled-coil region" evidence="1">
    <location>
        <begin position="548"/>
        <end position="630"/>
    </location>
</feature>
<feature type="compositionally biased region" description="Basic and acidic residues" evidence="6">
    <location>
        <begin position="22"/>
        <end position="31"/>
    </location>
</feature>
<feature type="compositionally biased region" description="Polar residues" evidence="6">
    <location>
        <begin position="506"/>
        <end position="528"/>
    </location>
</feature>
<feature type="compositionally biased region" description="Basic and acidic residues" evidence="6">
    <location>
        <begin position="672"/>
        <end position="688"/>
    </location>
</feature>
<feature type="modified residue" description="Phosphoserine" evidence="20">
    <location>
        <position position="10"/>
    </location>
</feature>
<feature type="modified residue" description="Phosphoserine" evidence="20">
    <location>
        <position position="522"/>
    </location>
</feature>
<feature type="mutagenesis site" description="Reduces dramatically histone methyltransferase activity toward nucleosomes." evidence="7">
    <original>R</original>
    <variation>G</variation>
    <location>
        <position position="195"/>
    </location>
</feature>
<feature type="mutagenesis site" description="Reduces dramatically histone methyltransferase activity toward nucleosomes." evidence="7">
    <original>C</original>
    <variation>A</variation>
    <location>
        <position position="201"/>
    </location>
</feature>
<feature type="sequence conflict" description="In Ref. 1; CAA89464." evidence="19" ref="1">
    <original>A</original>
    <variation>F</variation>
    <location>
        <position position="594"/>
    </location>
</feature>
<feature type="sequence conflict" description="In Ref. 1; CAA89464." evidence="19" ref="1">
    <original>A</original>
    <variation>S</variation>
    <location>
        <position position="605"/>
    </location>
</feature>
<feature type="sequence conflict" description="In Ref. 1; CAA89464." evidence="19" ref="1">
    <original>A</original>
    <variation>G</variation>
    <location>
        <position position="716"/>
    </location>
</feature>
<feature type="helix" evidence="23">
    <location>
        <begin position="35"/>
        <end position="43"/>
    </location>
</feature>
<feature type="strand" evidence="23">
    <location>
        <begin position="44"/>
        <end position="46"/>
    </location>
</feature>
<feature type="strand" evidence="23">
    <location>
        <begin position="53"/>
        <end position="56"/>
    </location>
</feature>
<feature type="strand" evidence="23">
    <location>
        <begin position="84"/>
        <end position="86"/>
    </location>
</feature>
<feature type="helix" evidence="23">
    <location>
        <begin position="89"/>
        <end position="92"/>
    </location>
</feature>
<feature type="turn" evidence="23">
    <location>
        <begin position="99"/>
        <end position="101"/>
    </location>
</feature>
<feature type="turn" evidence="23">
    <location>
        <begin position="103"/>
        <end position="105"/>
    </location>
</feature>
<feature type="strand" evidence="23">
    <location>
        <begin position="114"/>
        <end position="116"/>
    </location>
</feature>
<feature type="strand" evidence="23">
    <location>
        <begin position="122"/>
        <end position="124"/>
    </location>
</feature>
<feature type="strand" evidence="23">
    <location>
        <begin position="128"/>
        <end position="130"/>
    </location>
</feature>
<feature type="strand" evidence="23">
    <location>
        <begin position="134"/>
        <end position="136"/>
    </location>
</feature>
<feature type="strand" evidence="23">
    <location>
        <begin position="152"/>
        <end position="155"/>
    </location>
</feature>
<feature type="helix" evidence="23">
    <location>
        <begin position="156"/>
        <end position="168"/>
    </location>
</feature>
<feature type="strand" evidence="23">
    <location>
        <begin position="176"/>
        <end position="178"/>
    </location>
</feature>
<feature type="strand" evidence="23">
    <location>
        <begin position="180"/>
        <end position="186"/>
    </location>
</feature>
<feature type="strand" evidence="23">
    <location>
        <begin position="188"/>
        <end position="191"/>
    </location>
</feature>
<feature type="helix" evidence="23">
    <location>
        <begin position="193"/>
        <end position="195"/>
    </location>
</feature>
<feature type="strand" evidence="23">
    <location>
        <begin position="210"/>
        <end position="214"/>
    </location>
</feature>
<feature type="strand" evidence="21">
    <location>
        <begin position="481"/>
        <end position="494"/>
    </location>
</feature>
<feature type="turn" evidence="21">
    <location>
        <begin position="495"/>
        <end position="498"/>
    </location>
</feature>
<feature type="strand" evidence="21">
    <location>
        <begin position="499"/>
        <end position="503"/>
    </location>
</feature>
<feature type="helix" evidence="22">
    <location>
        <begin position="624"/>
        <end position="645"/>
    </location>
</feature>
<feature type="turn" evidence="22">
    <location>
        <begin position="648"/>
        <end position="652"/>
    </location>
</feature>
<feature type="helix" evidence="22">
    <location>
        <begin position="655"/>
        <end position="676"/>
    </location>
</feature>
<feature type="helix" evidence="22">
    <location>
        <begin position="688"/>
        <end position="712"/>
    </location>
</feature>
<evidence type="ECO:0000255" key="1"/>
<evidence type="ECO:0000255" key="2">
    <source>
        <dbReference type="PROSITE-ProRule" id="PRU00155"/>
    </source>
</evidence>
<evidence type="ECO:0000255" key="3">
    <source>
        <dbReference type="PROSITE-ProRule" id="PRU00190"/>
    </source>
</evidence>
<evidence type="ECO:0000255" key="4">
    <source>
        <dbReference type="PROSITE-ProRule" id="PRU00562"/>
    </source>
</evidence>
<evidence type="ECO:0000255" key="5">
    <source>
        <dbReference type="PROSITE-ProRule" id="PRU00901"/>
    </source>
</evidence>
<evidence type="ECO:0000256" key="6">
    <source>
        <dbReference type="SAM" id="MobiDB-lite"/>
    </source>
</evidence>
<evidence type="ECO:0000269" key="7">
    <source>
    </source>
</evidence>
<evidence type="ECO:0000269" key="8">
    <source>
    </source>
</evidence>
<evidence type="ECO:0000269" key="9">
    <source>
    </source>
</evidence>
<evidence type="ECO:0000269" key="10">
    <source>
    </source>
</evidence>
<evidence type="ECO:0000269" key="11">
    <source>
    </source>
</evidence>
<evidence type="ECO:0000269" key="12">
    <source>
    </source>
</evidence>
<evidence type="ECO:0000269" key="13">
    <source>
    </source>
</evidence>
<evidence type="ECO:0000269" key="14">
    <source>
    </source>
</evidence>
<evidence type="ECO:0000269" key="15">
    <source>
    </source>
</evidence>
<evidence type="ECO:0000269" key="16">
    <source>
    </source>
</evidence>
<evidence type="ECO:0000269" key="17">
    <source>
    </source>
</evidence>
<evidence type="ECO:0000269" key="18">
    <source>
    </source>
</evidence>
<evidence type="ECO:0000305" key="19"/>
<evidence type="ECO:0007744" key="20">
    <source>
    </source>
</evidence>
<evidence type="ECO:0007829" key="21">
    <source>
        <dbReference type="PDB" id="1E0N"/>
    </source>
</evidence>
<evidence type="ECO:0007829" key="22">
    <source>
        <dbReference type="PDB" id="2C5Z"/>
    </source>
</evidence>
<evidence type="ECO:0007829" key="23">
    <source>
        <dbReference type="PDB" id="7EA5"/>
    </source>
</evidence>
<keyword id="KW-0002">3D-structure</keyword>
<keyword id="KW-0158">Chromosome</keyword>
<keyword id="KW-0175">Coiled coil</keyword>
<keyword id="KW-0489">Methyltransferase</keyword>
<keyword id="KW-0539">Nucleus</keyword>
<keyword id="KW-0597">Phosphoprotein</keyword>
<keyword id="KW-1185">Reference proteome</keyword>
<keyword id="KW-0678">Repressor</keyword>
<keyword id="KW-0949">S-adenosyl-L-methionine</keyword>
<keyword id="KW-0804">Transcription</keyword>
<keyword id="KW-0805">Transcription regulation</keyword>
<keyword id="KW-0808">Transferase</keyword>
<reference key="1">
    <citation type="journal article" date="1996" name="EMBO J.">
        <title>Complete nucleotide sequence of Saccharomyces cerevisiae chromosome X.</title>
        <authorList>
            <person name="Galibert F."/>
            <person name="Alexandraki D."/>
            <person name="Baur A."/>
            <person name="Boles E."/>
            <person name="Chalwatzis N."/>
            <person name="Chuat J.-C."/>
            <person name="Coster F."/>
            <person name="Cziepluch C."/>
            <person name="de Haan M."/>
            <person name="Domdey H."/>
            <person name="Durand P."/>
            <person name="Entian K.-D."/>
            <person name="Gatius M."/>
            <person name="Goffeau A."/>
            <person name="Grivell L.A."/>
            <person name="Hennemann A."/>
            <person name="Herbert C.J."/>
            <person name="Heumann K."/>
            <person name="Hilger F."/>
            <person name="Hollenberg C.P."/>
            <person name="Huang M.-E."/>
            <person name="Jacq C."/>
            <person name="Jauniaux J.-C."/>
            <person name="Katsoulou C."/>
            <person name="Kirchrath L."/>
            <person name="Kleine K."/>
            <person name="Kordes E."/>
            <person name="Koetter P."/>
            <person name="Liebl S."/>
            <person name="Louis E.J."/>
            <person name="Manus V."/>
            <person name="Mewes H.-W."/>
            <person name="Miosga T."/>
            <person name="Obermaier B."/>
            <person name="Perea J."/>
            <person name="Pohl T.M."/>
            <person name="Portetelle D."/>
            <person name="Pujol A."/>
            <person name="Purnelle B."/>
            <person name="Ramezani Rad M."/>
            <person name="Rasmussen S.W."/>
            <person name="Rose M."/>
            <person name="Rossau R."/>
            <person name="Schaaff-Gerstenschlaeger I."/>
            <person name="Smits P.H.M."/>
            <person name="Scarcez T."/>
            <person name="Soriano N."/>
            <person name="To Van D."/>
            <person name="Tzermia M."/>
            <person name="Van Broekhoven A."/>
            <person name="Vandenbol M."/>
            <person name="Wedler H."/>
            <person name="von Wettstein D."/>
            <person name="Wambutt R."/>
            <person name="Zagulski M."/>
            <person name="Zollner A."/>
            <person name="Karpfinger-Hartl L."/>
        </authorList>
    </citation>
    <scope>NUCLEOTIDE SEQUENCE [LARGE SCALE GENOMIC DNA]</scope>
    <source>
        <strain>ATCC 204508 / S288c</strain>
    </source>
</reference>
<reference key="2">
    <citation type="journal article" date="2014" name="G3 (Bethesda)">
        <title>The reference genome sequence of Saccharomyces cerevisiae: Then and now.</title>
        <authorList>
            <person name="Engel S.R."/>
            <person name="Dietrich F.S."/>
            <person name="Fisk D.G."/>
            <person name="Binkley G."/>
            <person name="Balakrishnan R."/>
            <person name="Costanzo M.C."/>
            <person name="Dwight S.S."/>
            <person name="Hitz B.C."/>
            <person name="Karra K."/>
            <person name="Nash R.S."/>
            <person name="Weng S."/>
            <person name="Wong E.D."/>
            <person name="Lloyd P."/>
            <person name="Skrzypek M.S."/>
            <person name="Miyasato S.R."/>
            <person name="Simison M."/>
            <person name="Cherry J.M."/>
        </authorList>
    </citation>
    <scope>GENOME REANNOTATION</scope>
    <scope>SEQUENCE REVISION TO 594; 605 AND 716</scope>
    <source>
        <strain>ATCC 204508 / S288c</strain>
    </source>
</reference>
<reference key="3">
    <citation type="journal article" date="2002" name="J. Biol. Chem.">
        <title>Association of the histone methyltransferase Set2 with RNA polymerase II plays a role in transcription elongation.</title>
        <authorList>
            <person name="Li J."/>
            <person name="Moazed D."/>
            <person name="Gygi S.P."/>
        </authorList>
    </citation>
    <scope>INTERACTION WITH RBP1 AND RBP2</scope>
</reference>
<reference key="4">
    <citation type="journal article" date="2002" name="Mol. Cell. Biol.">
        <title>Set2 is a nucleosomal histone H3-selective methyltransferase that mediates transcriptional repression.</title>
        <authorList>
            <person name="Strahl B.D."/>
            <person name="Grant P.A."/>
            <person name="Briggs S.D."/>
            <person name="Sun Z.-W."/>
            <person name="Bone J.R."/>
            <person name="Caldwell J.A."/>
            <person name="Mollah S."/>
            <person name="Cook R.G."/>
            <person name="Shabanowitz J."/>
            <person name="Hunt D.F."/>
            <person name="Allis C.D."/>
        </authorList>
    </citation>
    <scope>FUNCTION</scope>
    <scope>CATALYTIC ACTIVITY</scope>
    <scope>MUTAGENESIS OF ARG-195 AND CYS-201</scope>
</reference>
<reference key="5">
    <citation type="journal article" date="2003" name="Genes Dev.">
        <title>Phosphorylation of RNA polymerase II CTD regulates H3 methylation in yeast.</title>
        <authorList>
            <person name="Xiao T."/>
            <person name="Hall H."/>
            <person name="Kizer K.O."/>
            <person name="Shibata Y."/>
            <person name="Hall M.C."/>
            <person name="Borchers C.H."/>
            <person name="Strahl B.D."/>
        </authorList>
    </citation>
    <scope>INTERACTION WITH RNA POLYMERASE II</scope>
    <scope>FUNCTION</scope>
</reference>
<reference key="6">
    <citation type="journal article" date="2003" name="J. Biol. Chem.">
        <title>The Set2 histone methyltransferase functions through the phosphorylated carboxyl-terminal domain of RNA polymerase II.</title>
        <authorList>
            <person name="Li B."/>
            <person name="Howe L."/>
            <person name="Anderson S."/>
            <person name="Yates J.R. III"/>
            <person name="Workman J.L."/>
        </authorList>
    </citation>
    <scope>INTERACTION WITH RNA POLYMERASE II</scope>
</reference>
<reference key="7">
    <citation type="journal article" date="2003" name="Mol. Cell. Biol.">
        <title>Methylation of histone H3 by Set2 in Saccharomyces cerevisiae is linked to transcriptional elongation by RNA polymerase II.</title>
        <authorList>
            <person name="Krogan N.J."/>
            <person name="Kim M."/>
            <person name="Tong A."/>
            <person name="Golshani A."/>
            <person name="Cagney G."/>
            <person name="Canadien V."/>
            <person name="Richards D.P."/>
            <person name="Beattie B.K."/>
            <person name="Emili A."/>
            <person name="Boone C."/>
            <person name="Shilatifard A."/>
            <person name="Buratowski S."/>
            <person name="Greenblatt J."/>
        </authorList>
    </citation>
    <scope>FUNCTION</scope>
    <scope>INTERACTION WITH RNA POLYMERASE II</scope>
</reference>
<reference key="8">
    <citation type="journal article" date="2003" name="Mol. Cell. Biol.">
        <title>Set2-catalyzed methylation of histone H3 represses basal expression of GAL4 in Saccharomyces cerevisiae.</title>
        <authorList>
            <person name="Landry J."/>
            <person name="Sutton A."/>
            <person name="Hesman T."/>
            <person name="Min J."/>
            <person name="Xu R.-M."/>
            <person name="Johnston M."/>
            <person name="Sternglanz R."/>
        </authorList>
    </citation>
    <scope>FUNCTION</scope>
    <scope>CATALYTIC ACTIVITY</scope>
    <scope>DOMAINS</scope>
</reference>
<reference key="9">
    <citation type="journal article" date="2003" name="Nucleic Acids Res.">
        <title>The histone 3 lysine 36 methyltransferase, SET2, is involved in transcriptional elongation.</title>
        <authorList>
            <person name="Schaft D."/>
            <person name="Roguev A."/>
            <person name="Kotovic K.M."/>
            <person name="Shevchenko A."/>
            <person name="Sarov M."/>
            <person name="Shevchenko A."/>
            <person name="Neugebauer K.M."/>
            <person name="Stewart A.F."/>
        </authorList>
    </citation>
    <scope>FUNCTION</scope>
    <scope>INTERACTION WITH RNA POLYMERASE II</scope>
</reference>
<reference key="10">
    <citation type="journal article" date="2003" name="Nature">
        <title>Global analysis of protein expression in yeast.</title>
        <authorList>
            <person name="Ghaemmaghami S."/>
            <person name="Huh W.-K."/>
            <person name="Bower K."/>
            <person name="Howson R.W."/>
            <person name="Belle A."/>
            <person name="Dephoure N."/>
            <person name="O'Shea E.K."/>
            <person name="Weissman J.S."/>
        </authorList>
    </citation>
    <scope>LEVEL OF PROTEIN EXPRESSION [LARGE SCALE ANALYSIS]</scope>
</reference>
<reference key="11">
    <citation type="journal article" date="2005" name="Mol. Cell. Biol.">
        <title>A novel domain in Set2 mediates RNA polymerase II interaction and couples histone H3 K36 methylation with transcript elongation.</title>
        <authorList>
            <person name="Kizer K.O."/>
            <person name="Phatnani H.P."/>
            <person name="Shibata Y."/>
            <person name="Hall H."/>
            <person name="Greenleaf A.L."/>
            <person name="Strahl B.D."/>
        </authorList>
    </citation>
    <scope>FUNCTION</scope>
    <scope>DOMAIN</scope>
    <scope>INTERACTION WITH RNA POLYMERASE II CTD</scope>
</reference>
<reference key="12">
    <citation type="journal article" date="2005" name="Mol. Cell. Biol.">
        <title>Dimethylation of histone H3 at lysine 36 demarcates regulatory and nonregulatory chromatin genome-wide.</title>
        <authorList>
            <person name="Rao B."/>
            <person name="Shibata Y."/>
            <person name="Strahl B.D."/>
            <person name="Lieb J.D."/>
        </authorList>
    </citation>
    <scope>FUNCTION</scope>
</reference>
<reference key="13">
    <citation type="journal article" date="2006" name="Biochem. Biophys. Res. Commun.">
        <title>The Set2 methyltransferase associates with Ssn6 yet Tup1-Ssn6 repression is independent of histone methylation.</title>
        <authorList>
            <person name="Tripic T."/>
            <person name="Edmondson D.G."/>
            <person name="Davie J.K."/>
            <person name="Strahl B.D."/>
            <person name="Dent S.Y.R."/>
        </authorList>
    </citation>
    <scope>INTERACTION WITH CYC8</scope>
</reference>
<reference key="14">
    <citation type="journal article" date="2008" name="Mol. Cell. Proteomics">
        <title>A multidimensional chromatography technology for in-depth phosphoproteome analysis.</title>
        <authorList>
            <person name="Albuquerque C.P."/>
            <person name="Smolka M.B."/>
            <person name="Payne S.H."/>
            <person name="Bafna V."/>
            <person name="Eng J."/>
            <person name="Zhou H."/>
        </authorList>
    </citation>
    <scope>IDENTIFICATION BY MASS SPECTROMETRY [LARGE SCALE ANALYSIS]</scope>
</reference>
<reference key="15">
    <citation type="journal article" date="2009" name="Science">
        <title>Global analysis of Cdk1 substrate phosphorylation sites provides insights into evolution.</title>
        <authorList>
            <person name="Holt L.J."/>
            <person name="Tuch B.B."/>
            <person name="Villen J."/>
            <person name="Johnson A.D."/>
            <person name="Gygi S.P."/>
            <person name="Morgan D.O."/>
        </authorList>
    </citation>
    <scope>PHOSPHORYLATION [LARGE SCALE ANALYSIS] AT SER-10 AND SER-522</scope>
    <scope>IDENTIFICATION BY MASS SPECTROMETRY [LARGE SCALE ANALYSIS]</scope>
</reference>
<reference key="16">
    <citation type="journal article" date="2010" name="Mol. Cell. Biol.">
        <title>Asf1 can promote trimethylation of H3 K36 by Set2.</title>
        <authorList>
            <person name="Lin L.J."/>
            <person name="Minard L.V."/>
            <person name="Johnston G.C."/>
            <person name="Singer R.A."/>
            <person name="Schultz M.C."/>
        </authorList>
    </citation>
    <scope>CATALYTIC ACTIVITY</scope>
</reference>
<reference key="17">
    <citation type="journal article" date="2000" name="Nat. Struct. Biol.">
        <title>Structural analysis of WW domains and design of a WW prototype.</title>
        <authorList>
            <person name="Macias M.J."/>
            <person name="Gervais V."/>
            <person name="Civera C."/>
            <person name="Oschkinat H."/>
        </authorList>
    </citation>
    <scope>STRUCTURE BY NMR OF 7-33</scope>
</reference>
<reference key="18">
    <citation type="journal article" date="2006" name="J. Biol. Chem.">
        <title>Structure and carboxyl-terminal domain (CTD) binding of the Set2 SRI domain that couples histone H3 Lys36 methylation to transcription.</title>
        <authorList>
            <person name="Vojnic E."/>
            <person name="Simon B."/>
            <person name="Strahl B.D."/>
            <person name="Sattler M."/>
            <person name="Cramer P."/>
        </authorList>
    </citation>
    <scope>STRUCTURE BY NMR OF 619-718</scope>
</reference>
<dbReference type="EC" id="2.1.1.359" evidence="7 13 18"/>
<dbReference type="EMBL" id="Z49444">
    <property type="protein sequence ID" value="CAA89464.1"/>
    <property type="molecule type" value="Genomic_DNA"/>
</dbReference>
<dbReference type="EMBL" id="BK006943">
    <property type="protein sequence ID" value="DAA08635.2"/>
    <property type="molecule type" value="Genomic_DNA"/>
</dbReference>
<dbReference type="PIR" id="S56951">
    <property type="entry name" value="S56951"/>
</dbReference>
<dbReference type="RefSeq" id="NP_012367.2">
    <property type="nucleotide sequence ID" value="NM_001181601.2"/>
</dbReference>
<dbReference type="PDB" id="1E0N">
    <property type="method" value="NMR"/>
    <property type="chains" value="A=479-505"/>
</dbReference>
<dbReference type="PDB" id="2C5Z">
    <property type="method" value="NMR"/>
    <property type="chains" value="A=620-719"/>
</dbReference>
<dbReference type="PDB" id="7EA5">
    <property type="method" value="EM"/>
    <property type="resolution" value="3.30 A"/>
    <property type="chains" value="K=33-260"/>
</dbReference>
<dbReference type="PDBsum" id="1E0N"/>
<dbReference type="PDBsum" id="2C5Z"/>
<dbReference type="PDBsum" id="7EA5"/>
<dbReference type="BMRB" id="P46995"/>
<dbReference type="EMDB" id="EMD-31039"/>
<dbReference type="SMR" id="P46995"/>
<dbReference type="BioGRID" id="33591">
    <property type="interactions" value="673"/>
</dbReference>
<dbReference type="DIP" id="DIP-2150N"/>
<dbReference type="FunCoup" id="P46995">
    <property type="interactions" value="175"/>
</dbReference>
<dbReference type="IntAct" id="P46995">
    <property type="interactions" value="82"/>
</dbReference>
<dbReference type="MINT" id="P46995"/>
<dbReference type="STRING" id="4932.YJL168C"/>
<dbReference type="iPTMnet" id="P46995"/>
<dbReference type="PaxDb" id="4932-YJL168C"/>
<dbReference type="PeptideAtlas" id="P46995"/>
<dbReference type="EnsemblFungi" id="YJL168C_mRNA">
    <property type="protein sequence ID" value="YJL168C"/>
    <property type="gene ID" value="YJL168C"/>
</dbReference>
<dbReference type="GeneID" id="853271"/>
<dbReference type="KEGG" id="sce:YJL168C"/>
<dbReference type="AGR" id="SGD:S000003704"/>
<dbReference type="SGD" id="S000003704">
    <property type="gene designation" value="SET2"/>
</dbReference>
<dbReference type="VEuPathDB" id="FungiDB:YJL168C"/>
<dbReference type="eggNOG" id="KOG4442">
    <property type="taxonomic scope" value="Eukaryota"/>
</dbReference>
<dbReference type="HOGENOM" id="CLU_008492_1_1_1"/>
<dbReference type="InParanoid" id="P46995"/>
<dbReference type="OMA" id="AQSQPCY"/>
<dbReference type="OrthoDB" id="422362at2759"/>
<dbReference type="BioCyc" id="MetaCyc:G3O-31606-MONOMER"/>
<dbReference type="BioCyc" id="YEAST:G3O-31606-MONOMER"/>
<dbReference type="BRENDA" id="2.1.1.359">
    <property type="organism ID" value="984"/>
</dbReference>
<dbReference type="Reactome" id="R-SCE-3214841">
    <property type="pathway name" value="PKMTs methylate histone lysines"/>
</dbReference>
<dbReference type="Reactome" id="R-SCE-5693565">
    <property type="pathway name" value="Recruitment and ATM-mediated phosphorylation of repair and signaling proteins at DNA double strand breaks"/>
</dbReference>
<dbReference type="BioGRID-ORCS" id="853271">
    <property type="hits" value="0 hits in 10 CRISPR screens"/>
</dbReference>
<dbReference type="EvolutionaryTrace" id="P46995"/>
<dbReference type="PRO" id="PR:P46995"/>
<dbReference type="Proteomes" id="UP000002311">
    <property type="component" value="Chromosome X"/>
</dbReference>
<dbReference type="RNAct" id="P46995">
    <property type="molecule type" value="protein"/>
</dbReference>
<dbReference type="GO" id="GO:0000785">
    <property type="term" value="C:chromatin"/>
    <property type="evidence" value="ECO:0000318"/>
    <property type="project" value="GO_Central"/>
</dbReference>
<dbReference type="GO" id="GO:0005829">
    <property type="term" value="C:cytosol"/>
    <property type="evidence" value="ECO:0000314"/>
    <property type="project" value="SGD"/>
</dbReference>
<dbReference type="GO" id="GO:0005634">
    <property type="term" value="C:nucleus"/>
    <property type="evidence" value="ECO:0000314"/>
    <property type="project" value="SGD"/>
</dbReference>
<dbReference type="GO" id="GO:0046975">
    <property type="term" value="F:histone H3K36 methyltransferase activity"/>
    <property type="evidence" value="ECO:0000314"/>
    <property type="project" value="SGD"/>
</dbReference>
<dbReference type="GO" id="GO:0140955">
    <property type="term" value="F:histone H3K36 trimethyltransferase activity"/>
    <property type="evidence" value="ECO:0007669"/>
    <property type="project" value="UniProtKB-EC"/>
</dbReference>
<dbReference type="GO" id="GO:0003723">
    <property type="term" value="F:RNA binding"/>
    <property type="evidence" value="ECO:0000314"/>
    <property type="project" value="SGD"/>
</dbReference>
<dbReference type="GO" id="GO:0030437">
    <property type="term" value="P:ascospore formation"/>
    <property type="evidence" value="ECO:0000315"/>
    <property type="project" value="SGD"/>
</dbReference>
<dbReference type="GO" id="GO:0006354">
    <property type="term" value="P:DNA-templated transcription elongation"/>
    <property type="evidence" value="ECO:0000314"/>
    <property type="project" value="SGD"/>
</dbReference>
<dbReference type="GO" id="GO:0006353">
    <property type="term" value="P:DNA-templated transcription termination"/>
    <property type="evidence" value="ECO:0000315"/>
    <property type="project" value="SGD"/>
</dbReference>
<dbReference type="GO" id="GO:0032259">
    <property type="term" value="P:methylation"/>
    <property type="evidence" value="ECO:0007669"/>
    <property type="project" value="UniProtKB-KW"/>
</dbReference>
<dbReference type="GO" id="GO:0060195">
    <property type="term" value="P:negative regulation of antisense RNA transcription"/>
    <property type="evidence" value="ECO:0000315"/>
    <property type="project" value="SGD"/>
</dbReference>
<dbReference type="GO" id="GO:0045128">
    <property type="term" value="P:negative regulation of reciprocal meiotic recombination"/>
    <property type="evidence" value="ECO:0000315"/>
    <property type="project" value="SGD"/>
</dbReference>
<dbReference type="GO" id="GO:0030174">
    <property type="term" value="P:regulation of DNA-templated DNA replication initiation"/>
    <property type="evidence" value="ECO:0000315"/>
    <property type="project" value="SGD"/>
</dbReference>
<dbReference type="GO" id="GO:0006355">
    <property type="term" value="P:regulation of DNA-templated transcription"/>
    <property type="evidence" value="ECO:0000314"/>
    <property type="project" value="SGD"/>
</dbReference>
<dbReference type="GO" id="GO:0009302">
    <property type="term" value="P:sno(s)RNA transcription"/>
    <property type="evidence" value="ECO:0000315"/>
    <property type="project" value="SGD"/>
</dbReference>
<dbReference type="GO" id="GO:0006283">
    <property type="term" value="P:transcription-coupled nucleotide-excision repair"/>
    <property type="evidence" value="ECO:0000315"/>
    <property type="project" value="SGD"/>
</dbReference>
<dbReference type="CDD" id="cd19172">
    <property type="entry name" value="SET_SETD2"/>
    <property type="match status" value="1"/>
</dbReference>
<dbReference type="FunFam" id="1.10.1740.100:FF:000004">
    <property type="entry name" value="Histone-lysine N-methyltransferase"/>
    <property type="match status" value="1"/>
</dbReference>
<dbReference type="FunFam" id="2.170.270.10:FF:000033">
    <property type="entry name" value="Histone-lysine N-methyltransferase"/>
    <property type="match status" value="1"/>
</dbReference>
<dbReference type="Gene3D" id="2.170.270.10">
    <property type="entry name" value="SET domain"/>
    <property type="match status" value="1"/>
</dbReference>
<dbReference type="Gene3D" id="1.10.1740.100">
    <property type="entry name" value="Set2, Rpb1 interacting domain"/>
    <property type="match status" value="1"/>
</dbReference>
<dbReference type="InterPro" id="IPR006560">
    <property type="entry name" value="AWS_dom"/>
</dbReference>
<dbReference type="InterPro" id="IPR003616">
    <property type="entry name" value="Post-SET_dom"/>
</dbReference>
<dbReference type="InterPro" id="IPR025788">
    <property type="entry name" value="Set2_fungi"/>
</dbReference>
<dbReference type="InterPro" id="IPR050777">
    <property type="entry name" value="SET2_Histone-Lys_MeTrsfase"/>
</dbReference>
<dbReference type="InterPro" id="IPR001214">
    <property type="entry name" value="SET_dom"/>
</dbReference>
<dbReference type="InterPro" id="IPR046341">
    <property type="entry name" value="SET_dom_sf"/>
</dbReference>
<dbReference type="InterPro" id="IPR044437">
    <property type="entry name" value="SETD2/Set2_SET"/>
</dbReference>
<dbReference type="InterPro" id="IPR013257">
    <property type="entry name" value="SRI"/>
</dbReference>
<dbReference type="InterPro" id="IPR038190">
    <property type="entry name" value="SRI_sf"/>
</dbReference>
<dbReference type="InterPro" id="IPR001202">
    <property type="entry name" value="WW_dom"/>
</dbReference>
<dbReference type="InterPro" id="IPR036020">
    <property type="entry name" value="WW_dom_sf"/>
</dbReference>
<dbReference type="PANTHER" id="PTHR22884">
    <property type="entry name" value="SET DOMAIN PROTEINS"/>
    <property type="match status" value="1"/>
</dbReference>
<dbReference type="Pfam" id="PF17907">
    <property type="entry name" value="AWS"/>
    <property type="match status" value="1"/>
</dbReference>
<dbReference type="Pfam" id="PF00856">
    <property type="entry name" value="SET"/>
    <property type="match status" value="1"/>
</dbReference>
<dbReference type="Pfam" id="PF08236">
    <property type="entry name" value="SRI"/>
    <property type="match status" value="1"/>
</dbReference>
<dbReference type="Pfam" id="PF18507">
    <property type="entry name" value="WW_1"/>
    <property type="match status" value="1"/>
</dbReference>
<dbReference type="SMART" id="SM00570">
    <property type="entry name" value="AWS"/>
    <property type="match status" value="1"/>
</dbReference>
<dbReference type="SMART" id="SM00508">
    <property type="entry name" value="PostSET"/>
    <property type="match status" value="1"/>
</dbReference>
<dbReference type="SMART" id="SM00317">
    <property type="entry name" value="SET"/>
    <property type="match status" value="1"/>
</dbReference>
<dbReference type="SMART" id="SM00456">
    <property type="entry name" value="WW"/>
    <property type="match status" value="1"/>
</dbReference>
<dbReference type="SUPFAM" id="SSF82199">
    <property type="entry name" value="SET domain"/>
    <property type="match status" value="1"/>
</dbReference>
<dbReference type="SUPFAM" id="SSF51045">
    <property type="entry name" value="WW domain"/>
    <property type="match status" value="1"/>
</dbReference>
<dbReference type="PROSITE" id="PS51215">
    <property type="entry name" value="AWS"/>
    <property type="match status" value="1"/>
</dbReference>
<dbReference type="PROSITE" id="PS50868">
    <property type="entry name" value="POST_SET"/>
    <property type="match status" value="1"/>
</dbReference>
<dbReference type="PROSITE" id="PS51568">
    <property type="entry name" value="SAM_MT43_SET2_1"/>
    <property type="match status" value="1"/>
</dbReference>
<dbReference type="PROSITE" id="PS50280">
    <property type="entry name" value="SET"/>
    <property type="match status" value="1"/>
</dbReference>
<comment type="function">
    <text evidence="7 10 11 12 13 15 16">Histone methyltransferase that trimethylates histone H3 'Lys-36' forming H3K36me3. Involved in transcription elongation as well as in transcription repression. The methyltransferase activity requires the recruitment to the RNA polymerase II, which is CTK1 dependent.</text>
</comment>
<comment type="catalytic activity">
    <reaction evidence="5 7 13 18">
        <text>L-lysyl(36)-[histone H3] + 3 S-adenosyl-L-methionine = N(6),N(6),N(6)-trimethyl-L-lysyl(36)-[histone H3] + 3 S-adenosyl-L-homocysteine + 3 H(+)</text>
        <dbReference type="Rhea" id="RHEA:60324"/>
        <dbReference type="Rhea" id="RHEA-COMP:9785"/>
        <dbReference type="Rhea" id="RHEA-COMP:15536"/>
        <dbReference type="ChEBI" id="CHEBI:15378"/>
        <dbReference type="ChEBI" id="CHEBI:29969"/>
        <dbReference type="ChEBI" id="CHEBI:57856"/>
        <dbReference type="ChEBI" id="CHEBI:59789"/>
        <dbReference type="ChEBI" id="CHEBI:61961"/>
        <dbReference type="EC" id="2.1.1.359"/>
    </reaction>
</comment>
<comment type="subunit">
    <text evidence="8 9 10 11 12 15 17">Interacts with the RNA polymerase II hyperphosphorylated CTD. Interacts with CYC8.</text>
</comment>
<comment type="interaction">
    <interactant intactId="EBI-16985">
        <id>P46995</id>
    </interactant>
    <interactant intactId="EBI-8098">
        <id>P61830</id>
        <label>HHT2</label>
    </interactant>
    <organismsDiffer>false</organismsDiffer>
    <experiments>2</experiments>
</comment>
<comment type="subcellular location">
    <subcellularLocation>
        <location>Nucleus</location>
    </subcellularLocation>
    <subcellularLocation>
        <location evidence="19">Chromosome</location>
    </subcellularLocation>
</comment>
<comment type="domain">
    <text evidence="13 15">The AWS and SET domains are necessary for transcription repression.</text>
</comment>
<comment type="miscellaneous">
    <text evidence="14">Present with 217 molecules/cell in log phase SD medium.</text>
</comment>
<comment type="similarity">
    <text evidence="5">Belongs to the class V-like SAM-binding methyltransferase superfamily. Histone-lysine methyltransferase family. SET2 subfamily.</text>
</comment>
<organism>
    <name type="scientific">Saccharomyces cerevisiae (strain ATCC 204508 / S288c)</name>
    <name type="common">Baker's yeast</name>
    <dbReference type="NCBI Taxonomy" id="559292"/>
    <lineage>
        <taxon>Eukaryota</taxon>
        <taxon>Fungi</taxon>
        <taxon>Dikarya</taxon>
        <taxon>Ascomycota</taxon>
        <taxon>Saccharomycotina</taxon>
        <taxon>Saccharomycetes</taxon>
        <taxon>Saccharomycetales</taxon>
        <taxon>Saccharomycetaceae</taxon>
        <taxon>Saccharomyces</taxon>
    </lineage>
</organism>